<accession>Q765Z4</accession>
<evidence type="ECO:0000250" key="1"/>
<evidence type="ECO:0000255" key="2"/>
<evidence type="ECO:0000256" key="3">
    <source>
        <dbReference type="SAM" id="MobiDB-lite"/>
    </source>
</evidence>
<evidence type="ECO:0000269" key="4">
    <source>
    </source>
</evidence>
<evidence type="ECO:0000305" key="5"/>
<keyword id="KW-0165">Cleavage on pair of basic residues</keyword>
<keyword id="KW-1015">Disulfide bond</keyword>
<keyword id="KW-1185">Reference proteome</keyword>
<keyword id="KW-0964">Secreted</keyword>
<keyword id="KW-0732">Signal</keyword>
<keyword id="KW-0838">Vasoactive</keyword>
<keyword id="KW-0839">Vasoconstrictor</keyword>
<proteinExistence type="evidence at transcript level"/>
<feature type="signal peptide" evidence="2">
    <location>
        <begin position="1"/>
        <end position="16"/>
    </location>
</feature>
<feature type="propeptide" id="PRO_0000008108" evidence="1">
    <location>
        <begin position="17"/>
        <end position="86"/>
    </location>
</feature>
<feature type="peptide" id="PRO_0000008109" description="Endothelin-3">
    <location>
        <begin position="89"/>
        <end position="109"/>
    </location>
</feature>
<feature type="propeptide" id="PRO_0000008110" evidence="1">
    <location>
        <begin position="110"/>
        <end position="198"/>
    </location>
</feature>
<feature type="region of interest" description="Disordered" evidence="3">
    <location>
        <begin position="22"/>
        <end position="79"/>
    </location>
</feature>
<feature type="region of interest" description="Endothelin-like">
    <location>
        <begin position="150"/>
        <end position="164"/>
    </location>
</feature>
<feature type="region of interest" description="Disordered" evidence="3">
    <location>
        <begin position="174"/>
        <end position="198"/>
    </location>
</feature>
<feature type="site" description="Cleavage; by KEL" evidence="1">
    <location>
        <begin position="109"/>
        <end position="110"/>
    </location>
</feature>
<feature type="disulfide bond" evidence="1">
    <location>
        <begin position="89"/>
        <end position="103"/>
    </location>
</feature>
<feature type="disulfide bond" evidence="1">
    <location>
        <begin position="91"/>
        <end position="99"/>
    </location>
</feature>
<dbReference type="EMBL" id="AB115086">
    <property type="protein sequence ID" value="BAD07479.1"/>
    <property type="molecule type" value="mRNA"/>
</dbReference>
<dbReference type="RefSeq" id="NP_001002942.1">
    <property type="nucleotide sequence ID" value="NM_001002942.1"/>
</dbReference>
<dbReference type="FunCoup" id="Q765Z4">
    <property type="interactions" value="41"/>
</dbReference>
<dbReference type="STRING" id="9615.ENSCAFP00000018044"/>
<dbReference type="PaxDb" id="9612-ENSCAFP00000018044"/>
<dbReference type="GeneID" id="403406"/>
<dbReference type="KEGG" id="cfa:403406"/>
<dbReference type="CTD" id="1908"/>
<dbReference type="eggNOG" id="ENOG502S4W0">
    <property type="taxonomic scope" value="Eukaryota"/>
</dbReference>
<dbReference type="InParanoid" id="Q765Z4"/>
<dbReference type="OrthoDB" id="9943124at2759"/>
<dbReference type="Proteomes" id="UP000002254">
    <property type="component" value="Unplaced"/>
</dbReference>
<dbReference type="Proteomes" id="UP000694429">
    <property type="component" value="Unplaced"/>
</dbReference>
<dbReference type="Proteomes" id="UP000694542">
    <property type="component" value="Unplaced"/>
</dbReference>
<dbReference type="Proteomes" id="UP000805418">
    <property type="component" value="Unplaced"/>
</dbReference>
<dbReference type="GO" id="GO:0005615">
    <property type="term" value="C:extracellular space"/>
    <property type="evidence" value="ECO:0000318"/>
    <property type="project" value="GO_Central"/>
</dbReference>
<dbReference type="GO" id="GO:0031708">
    <property type="term" value="F:endothelin B receptor binding"/>
    <property type="evidence" value="ECO:0000318"/>
    <property type="project" value="GO_Central"/>
</dbReference>
<dbReference type="GO" id="GO:0005179">
    <property type="term" value="F:hormone activity"/>
    <property type="evidence" value="ECO:0000318"/>
    <property type="project" value="GO_Central"/>
</dbReference>
<dbReference type="GO" id="GO:0006874">
    <property type="term" value="P:intracellular calcium ion homeostasis"/>
    <property type="evidence" value="ECO:0000318"/>
    <property type="project" value="GO_Central"/>
</dbReference>
<dbReference type="GO" id="GO:0045987">
    <property type="term" value="P:positive regulation of smooth muscle contraction"/>
    <property type="evidence" value="ECO:0000318"/>
    <property type="project" value="GO_Central"/>
</dbReference>
<dbReference type="GO" id="GO:0003100">
    <property type="term" value="P:regulation of systemic arterial blood pressure by endothelin"/>
    <property type="evidence" value="ECO:0000318"/>
    <property type="project" value="GO_Central"/>
</dbReference>
<dbReference type="GO" id="GO:0019229">
    <property type="term" value="P:regulation of vasoconstriction"/>
    <property type="evidence" value="ECO:0007669"/>
    <property type="project" value="InterPro"/>
</dbReference>
<dbReference type="GO" id="GO:0014826">
    <property type="term" value="P:vein smooth muscle contraction"/>
    <property type="evidence" value="ECO:0000318"/>
    <property type="project" value="GO_Central"/>
</dbReference>
<dbReference type="InterPro" id="IPR020475">
    <property type="entry name" value="Endothelin"/>
</dbReference>
<dbReference type="InterPro" id="IPR019764">
    <property type="entry name" value="Endothelin_toxin_CS"/>
</dbReference>
<dbReference type="InterPro" id="IPR001928">
    <property type="entry name" value="Endothln-like_toxin"/>
</dbReference>
<dbReference type="PANTHER" id="PTHR13874">
    <property type="entry name" value="ENDOTHELIN"/>
    <property type="match status" value="1"/>
</dbReference>
<dbReference type="PANTHER" id="PTHR13874:SF11">
    <property type="entry name" value="ENDOTHELIN-3"/>
    <property type="match status" value="1"/>
</dbReference>
<dbReference type="Pfam" id="PF00322">
    <property type="entry name" value="Endothelin"/>
    <property type="match status" value="1"/>
</dbReference>
<dbReference type="PRINTS" id="PR00365">
    <property type="entry name" value="ENDOTHELIN"/>
</dbReference>
<dbReference type="SMART" id="SM00272">
    <property type="entry name" value="END"/>
    <property type="match status" value="2"/>
</dbReference>
<dbReference type="PROSITE" id="PS00270">
    <property type="entry name" value="ENDOTHELIN"/>
    <property type="match status" value="2"/>
</dbReference>
<reference key="1">
    <citation type="journal article" date="2004" name="J. Vet. Med. Sci.">
        <title>Complete cDNA sequence and mRNA expression of dog preproendothelin-3.</title>
        <authorList>
            <person name="Fujimori Y."/>
            <person name="Uchide T."/>
            <person name="Temma K."/>
            <person name="Sasaki T."/>
            <person name="Kizaki K."/>
            <person name="Hara Y."/>
            <person name="Saida K."/>
        </authorList>
    </citation>
    <scope>NUCLEOTIDE SEQUENCE [MRNA]</scope>
    <scope>TISSUE SPECIFICITY</scope>
    <source>
        <tissue>Lung</tissue>
    </source>
</reference>
<sequence length="198" mass="21527">MEPGLWLLFGLTVTSAAGLVPCPQPGDAGKSGVPGTPPTARSEGDIQEPVAMTAVQGPSPRSPEQEQELGRFGEQASKGGPVHGRARRCTCFTYKDKECVYYCHLDIIWINTPEQTVPYGLSNYRGSFRGRRSTGLFPQSPQPSKWTQRCACVQSQDSACLHFCTRTLAVSRNSRTATNPDKEEEPASRGNGGLRPTR</sequence>
<gene>
    <name type="primary">EDN3</name>
</gene>
<comment type="function">
    <text>Endothelins are endothelium-derived vasoconstrictor peptides.</text>
</comment>
<comment type="subcellular location">
    <subcellularLocation>
        <location>Secreted</location>
    </subcellularLocation>
</comment>
<comment type="tissue specificity">
    <text evidence="4">Expressed in which included heart, lung, liver, kidney, spleen, stomach, pancreas, duodenum, colon, uterus, ovary and testis.</text>
</comment>
<comment type="similarity">
    <text evidence="5">Belongs to the endothelin/sarafotoxin family.</text>
</comment>
<protein>
    <recommendedName>
        <fullName>Endothelin-3</fullName>
        <shortName>ET-3</shortName>
    </recommendedName>
    <alternativeName>
        <fullName>Preproendothelin-3</fullName>
        <shortName>PPET3</shortName>
    </alternativeName>
</protein>
<name>EDN3_CANLF</name>
<organism>
    <name type="scientific">Canis lupus familiaris</name>
    <name type="common">Dog</name>
    <name type="synonym">Canis familiaris</name>
    <dbReference type="NCBI Taxonomy" id="9615"/>
    <lineage>
        <taxon>Eukaryota</taxon>
        <taxon>Metazoa</taxon>
        <taxon>Chordata</taxon>
        <taxon>Craniata</taxon>
        <taxon>Vertebrata</taxon>
        <taxon>Euteleostomi</taxon>
        <taxon>Mammalia</taxon>
        <taxon>Eutheria</taxon>
        <taxon>Laurasiatheria</taxon>
        <taxon>Carnivora</taxon>
        <taxon>Caniformia</taxon>
        <taxon>Canidae</taxon>
        <taxon>Canis</taxon>
    </lineage>
</organism>